<accession>P37762</accession>
<organism>
    <name type="scientific">Neisseria gonorrhoeae</name>
    <dbReference type="NCBI Taxonomy" id="485"/>
    <lineage>
        <taxon>Bacteria</taxon>
        <taxon>Pseudomonadati</taxon>
        <taxon>Pseudomonadota</taxon>
        <taxon>Betaproteobacteria</taxon>
        <taxon>Neisseriales</taxon>
        <taxon>Neisseriaceae</taxon>
        <taxon>Neisseria</taxon>
    </lineage>
</organism>
<gene>
    <name type="primary">rmlA</name>
    <name type="synonym">rfbA</name>
</gene>
<comment type="function">
    <text evidence="1">Catalyzes the formation of dTDP-glucose, from dTTP and glucose 1-phosphate, as well as its pyrophosphorolysis.</text>
</comment>
<comment type="catalytic activity">
    <reaction evidence="1">
        <text>dTTP + alpha-D-glucose 1-phosphate + H(+) = dTDP-alpha-D-glucose + diphosphate</text>
        <dbReference type="Rhea" id="RHEA:15225"/>
        <dbReference type="ChEBI" id="CHEBI:15378"/>
        <dbReference type="ChEBI" id="CHEBI:33019"/>
        <dbReference type="ChEBI" id="CHEBI:37568"/>
        <dbReference type="ChEBI" id="CHEBI:57477"/>
        <dbReference type="ChEBI" id="CHEBI:58601"/>
        <dbReference type="EC" id="2.7.7.24"/>
    </reaction>
</comment>
<comment type="cofactor">
    <cofactor evidence="1">
        <name>Mg(2+)</name>
        <dbReference type="ChEBI" id="CHEBI:18420"/>
    </cofactor>
    <text evidence="1">Binds 1 Mg(2+) ion per subunit.</text>
</comment>
<comment type="subunit">
    <text evidence="1">Homotetramer.</text>
</comment>
<comment type="similarity">
    <text evidence="2">Belongs to the glucose-1-phosphate thymidylyltransferase family.</text>
</comment>
<feature type="chain" id="PRO_0000207996" description="Glucose-1-phosphate thymidylyltransferase">
    <location>
        <begin position="1"/>
        <end position="288"/>
    </location>
</feature>
<feature type="binding site" evidence="1">
    <location>
        <position position="108"/>
    </location>
    <ligand>
        <name>Mg(2+)</name>
        <dbReference type="ChEBI" id="CHEBI:18420"/>
    </ligand>
</feature>
<feature type="binding site" evidence="1">
    <location>
        <position position="223"/>
    </location>
    <ligand>
        <name>Mg(2+)</name>
        <dbReference type="ChEBI" id="CHEBI:18420"/>
    </ligand>
</feature>
<reference key="1">
    <citation type="journal article" date="1994" name="J. Bacteriol.">
        <title>The identification of cryptic rhamnose biosynthesis genes in Neisseria gonorrhoeae and their relationship to lipopolysaccharide biosynthesis.</title>
        <authorList>
            <person name="Robertson B.D."/>
            <person name="Frosch M."/>
            <person name="van Putten J.P.M."/>
        </authorList>
    </citation>
    <scope>NUCLEOTIDE SEQUENCE [GENOMIC DNA]</scope>
    <source>
        <strain>MS11</strain>
    </source>
</reference>
<proteinExistence type="inferred from homology"/>
<keyword id="KW-0460">Magnesium</keyword>
<keyword id="KW-0479">Metal-binding</keyword>
<keyword id="KW-0548">Nucleotidyltransferase</keyword>
<keyword id="KW-0808">Transferase</keyword>
<protein>
    <recommendedName>
        <fullName>Glucose-1-phosphate thymidylyltransferase</fullName>
        <ecNumber evidence="1">2.7.7.24</ecNumber>
    </recommendedName>
    <alternativeName>
        <fullName>dTDP-glucose pyrophosphorylase</fullName>
    </alternativeName>
    <alternativeName>
        <fullName>dTDP-glucose synthase</fullName>
    </alternativeName>
</protein>
<evidence type="ECO:0000250" key="1">
    <source>
        <dbReference type="UniProtKB" id="P61887"/>
    </source>
</evidence>
<evidence type="ECO:0000305" key="2"/>
<sequence length="288" mass="32029">MKGIILAGGSGTRLYPITRGVSKQLLPVYDKPMIYYPLSVLMLAGIRDILVITAPEDNAAFQRLLGDGSDFGIRLQYAVQPSPDGLAQAFIIGEEFIGNGNVCLILGDNIFYGQSFTQTLKQAAAKTHGATVFGYRVKDPERFGVVEFDENFNALSIEEKPQQPKSDWAVTGLYFHDNRAVEFAKQLKPSARGELEISDLNRMYLEDGSLSVQILGRGFAWLDTGTQESLHEAASFVQTVQNIQNLHIACLEEIAWRNGWLTKKDVETRAKHLEKTAYGQYLLHLIGK</sequence>
<dbReference type="EC" id="2.7.7.24" evidence="1"/>
<dbReference type="EMBL" id="Z32742">
    <property type="protein sequence ID" value="CAA83653.1"/>
    <property type="molecule type" value="Genomic_DNA"/>
</dbReference>
<dbReference type="EMBL" id="Z21508">
    <property type="protein sequence ID" value="CAA79719.1"/>
    <property type="molecule type" value="Genomic_DNA"/>
</dbReference>
<dbReference type="PIR" id="S47046">
    <property type="entry name" value="S47046"/>
</dbReference>
<dbReference type="RefSeq" id="WP_017147193.1">
    <property type="nucleotide sequence ID" value="NZ_RJZD01000019.1"/>
</dbReference>
<dbReference type="SMR" id="P37762"/>
<dbReference type="GO" id="GO:0008879">
    <property type="term" value="F:glucose-1-phosphate thymidylyltransferase activity"/>
    <property type="evidence" value="ECO:0007669"/>
    <property type="project" value="UniProtKB-EC"/>
</dbReference>
<dbReference type="GO" id="GO:0046872">
    <property type="term" value="F:metal ion binding"/>
    <property type="evidence" value="ECO:0007669"/>
    <property type="project" value="UniProtKB-KW"/>
</dbReference>
<dbReference type="GO" id="GO:0009058">
    <property type="term" value="P:biosynthetic process"/>
    <property type="evidence" value="ECO:0007669"/>
    <property type="project" value="InterPro"/>
</dbReference>
<dbReference type="CDD" id="cd02538">
    <property type="entry name" value="G1P_TT_short"/>
    <property type="match status" value="1"/>
</dbReference>
<dbReference type="FunFam" id="3.90.550.10:FF:000023">
    <property type="entry name" value="Glucose-1-phosphate thymidylyltransferase"/>
    <property type="match status" value="1"/>
</dbReference>
<dbReference type="Gene3D" id="3.90.550.10">
    <property type="entry name" value="Spore Coat Polysaccharide Biosynthesis Protein SpsA, Chain A"/>
    <property type="match status" value="1"/>
</dbReference>
<dbReference type="InterPro" id="IPR005907">
    <property type="entry name" value="G1P_thy_trans_s"/>
</dbReference>
<dbReference type="InterPro" id="IPR005835">
    <property type="entry name" value="NTP_transferase_dom"/>
</dbReference>
<dbReference type="InterPro" id="IPR029044">
    <property type="entry name" value="Nucleotide-diphossugar_trans"/>
</dbReference>
<dbReference type="NCBIfam" id="TIGR01207">
    <property type="entry name" value="rmlA"/>
    <property type="match status" value="1"/>
</dbReference>
<dbReference type="PANTHER" id="PTHR43532">
    <property type="entry name" value="GLUCOSE-1-PHOSPHATE THYMIDYLYLTRANSFERASE"/>
    <property type="match status" value="1"/>
</dbReference>
<dbReference type="PANTHER" id="PTHR43532:SF4">
    <property type="entry name" value="GLUCOSE-1-PHOSPHATE THYMIDYLYLTRANSFERASE 2"/>
    <property type="match status" value="1"/>
</dbReference>
<dbReference type="Pfam" id="PF00483">
    <property type="entry name" value="NTP_transferase"/>
    <property type="match status" value="1"/>
</dbReference>
<dbReference type="SUPFAM" id="SSF53448">
    <property type="entry name" value="Nucleotide-diphospho-sugar transferases"/>
    <property type="match status" value="1"/>
</dbReference>
<name>RMLA_NEIGO</name>